<accession>A1E9W9</accession>
<organism>
    <name type="scientific">Sorghum bicolor</name>
    <name type="common">Sorghum</name>
    <name type="synonym">Sorghum vulgare</name>
    <dbReference type="NCBI Taxonomy" id="4558"/>
    <lineage>
        <taxon>Eukaryota</taxon>
        <taxon>Viridiplantae</taxon>
        <taxon>Streptophyta</taxon>
        <taxon>Embryophyta</taxon>
        <taxon>Tracheophyta</taxon>
        <taxon>Spermatophyta</taxon>
        <taxon>Magnoliopsida</taxon>
        <taxon>Liliopsida</taxon>
        <taxon>Poales</taxon>
        <taxon>Poaceae</taxon>
        <taxon>PACMAD clade</taxon>
        <taxon>Panicoideae</taxon>
        <taxon>Andropogonodae</taxon>
        <taxon>Andropogoneae</taxon>
        <taxon>Sorghinae</taxon>
        <taxon>Sorghum</taxon>
    </lineage>
</organism>
<name>RR7_SORBI</name>
<reference key="1">
    <citation type="journal article" date="2007" name="Theor. Appl. Genet.">
        <title>Complete chloroplast genome sequences of Hordeum vulgare, Sorghum bicolor and Agrostis stolonifera, and comparative analyses with other grass genomes.</title>
        <authorList>
            <person name="Saski C."/>
            <person name="Lee S.-B."/>
            <person name="Fjellheim S."/>
            <person name="Guda C."/>
            <person name="Jansen R.K."/>
            <person name="Luo H."/>
            <person name="Tomkins J."/>
            <person name="Rognli O.A."/>
            <person name="Daniell H."/>
            <person name="Clarke J.L."/>
        </authorList>
    </citation>
    <scope>NUCLEOTIDE SEQUENCE [LARGE SCALE GENOMIC DNA]</scope>
    <source>
        <strain>cv. BTx623</strain>
    </source>
</reference>
<geneLocation type="chloroplast"/>
<sequence length="156" mass="17659">MSRRGTAEKRTAKSDPIFRNRLVNMVVNRIMKDGKKSLAYQILYRAVKKIQQKTETNPLLVLRQAIRRVTPNIGVKTRRNKKGSTRKVPIEIGSKQGRALAIRWLLEASQKRPGRNMAFKLSSELVDAAKGSGGAIRKKEATHRMAEANRALAHFR</sequence>
<dbReference type="EMBL" id="EF115542">
    <property type="protein sequence ID" value="ABK79540.1"/>
    <property type="molecule type" value="Genomic_DNA"/>
</dbReference>
<dbReference type="EMBL" id="EF115542">
    <property type="protein sequence ID" value="ABK79555.1"/>
    <property type="molecule type" value="Genomic_DNA"/>
</dbReference>
<dbReference type="SMR" id="A1E9W9"/>
<dbReference type="FunCoup" id="A1E9W9">
    <property type="interactions" value="1034"/>
</dbReference>
<dbReference type="STRING" id="4558.A1E9W9"/>
<dbReference type="KEGG" id="sbi:4549157"/>
<dbReference type="KEGG" id="sbi:4549187"/>
<dbReference type="eggNOG" id="KOG3291">
    <property type="taxonomic scope" value="Eukaryota"/>
</dbReference>
<dbReference type="InParanoid" id="A1E9W9"/>
<dbReference type="OrthoDB" id="607010at2759"/>
<dbReference type="Proteomes" id="UP000000768">
    <property type="component" value="Chloroplast"/>
</dbReference>
<dbReference type="ExpressionAtlas" id="A1E9W9">
    <property type="expression patterns" value="baseline"/>
</dbReference>
<dbReference type="GO" id="GO:0009507">
    <property type="term" value="C:chloroplast"/>
    <property type="evidence" value="ECO:0007669"/>
    <property type="project" value="UniProtKB-SubCell"/>
</dbReference>
<dbReference type="GO" id="GO:0005840">
    <property type="term" value="C:ribosome"/>
    <property type="evidence" value="ECO:0000318"/>
    <property type="project" value="GO_Central"/>
</dbReference>
<dbReference type="GO" id="GO:0015935">
    <property type="term" value="C:small ribosomal subunit"/>
    <property type="evidence" value="ECO:0007669"/>
    <property type="project" value="InterPro"/>
</dbReference>
<dbReference type="GO" id="GO:0003729">
    <property type="term" value="F:mRNA binding"/>
    <property type="evidence" value="ECO:0000318"/>
    <property type="project" value="GO_Central"/>
</dbReference>
<dbReference type="GO" id="GO:0019843">
    <property type="term" value="F:rRNA binding"/>
    <property type="evidence" value="ECO:0000318"/>
    <property type="project" value="GO_Central"/>
</dbReference>
<dbReference type="GO" id="GO:0003735">
    <property type="term" value="F:structural constituent of ribosome"/>
    <property type="evidence" value="ECO:0000318"/>
    <property type="project" value="GO_Central"/>
</dbReference>
<dbReference type="GO" id="GO:0000028">
    <property type="term" value="P:ribosomal small subunit assembly"/>
    <property type="evidence" value="ECO:0000318"/>
    <property type="project" value="GO_Central"/>
</dbReference>
<dbReference type="GO" id="GO:0006412">
    <property type="term" value="P:translation"/>
    <property type="evidence" value="ECO:0000318"/>
    <property type="project" value="GO_Central"/>
</dbReference>
<dbReference type="CDD" id="cd14871">
    <property type="entry name" value="uS7_Chloroplast"/>
    <property type="match status" value="1"/>
</dbReference>
<dbReference type="FunFam" id="1.10.455.10:FF:000001">
    <property type="entry name" value="30S ribosomal protein S7"/>
    <property type="match status" value="1"/>
</dbReference>
<dbReference type="Gene3D" id="1.10.455.10">
    <property type="entry name" value="Ribosomal protein S7 domain"/>
    <property type="match status" value="1"/>
</dbReference>
<dbReference type="HAMAP" id="MF_00480_B">
    <property type="entry name" value="Ribosomal_uS7_B"/>
    <property type="match status" value="1"/>
</dbReference>
<dbReference type="InterPro" id="IPR000235">
    <property type="entry name" value="Ribosomal_uS7"/>
</dbReference>
<dbReference type="InterPro" id="IPR005717">
    <property type="entry name" value="Ribosomal_uS7_bac/org-type"/>
</dbReference>
<dbReference type="InterPro" id="IPR020606">
    <property type="entry name" value="Ribosomal_uS7_CS"/>
</dbReference>
<dbReference type="InterPro" id="IPR023798">
    <property type="entry name" value="Ribosomal_uS7_dom"/>
</dbReference>
<dbReference type="InterPro" id="IPR036823">
    <property type="entry name" value="Ribosomal_uS7_dom_sf"/>
</dbReference>
<dbReference type="NCBIfam" id="TIGR01029">
    <property type="entry name" value="rpsG_bact"/>
    <property type="match status" value="1"/>
</dbReference>
<dbReference type="PANTHER" id="PTHR11205">
    <property type="entry name" value="RIBOSOMAL PROTEIN S7"/>
    <property type="match status" value="1"/>
</dbReference>
<dbReference type="Pfam" id="PF00177">
    <property type="entry name" value="Ribosomal_S7"/>
    <property type="match status" value="1"/>
</dbReference>
<dbReference type="PIRSF" id="PIRSF002122">
    <property type="entry name" value="RPS7p_RPS7a_RPS5e_RPS7o"/>
    <property type="match status" value="1"/>
</dbReference>
<dbReference type="SUPFAM" id="SSF47973">
    <property type="entry name" value="Ribosomal protein S7"/>
    <property type="match status" value="1"/>
</dbReference>
<dbReference type="PROSITE" id="PS00052">
    <property type="entry name" value="RIBOSOMAL_S7"/>
    <property type="match status" value="1"/>
</dbReference>
<gene>
    <name type="primary">rps7-A</name>
</gene>
<gene>
    <name type="primary">rps7-B</name>
</gene>
<feature type="chain" id="PRO_0000277059" description="Small ribosomal subunit protein uS7cz/uS7cy">
    <location>
        <begin position="1"/>
        <end position="156"/>
    </location>
</feature>
<keyword id="KW-0150">Chloroplast</keyword>
<keyword id="KW-0934">Plastid</keyword>
<keyword id="KW-1185">Reference proteome</keyword>
<keyword id="KW-0687">Ribonucleoprotein</keyword>
<keyword id="KW-0689">Ribosomal protein</keyword>
<keyword id="KW-0694">RNA-binding</keyword>
<keyword id="KW-0699">rRNA-binding</keyword>
<proteinExistence type="inferred from homology"/>
<evidence type="ECO:0000250" key="1"/>
<evidence type="ECO:0000255" key="2">
    <source>
        <dbReference type="HAMAP-Rule" id="MF_00480"/>
    </source>
</evidence>
<evidence type="ECO:0000305" key="3"/>
<comment type="function">
    <text evidence="1">One of the primary rRNA binding proteins, it binds directly to 16S rRNA where it nucleates assembly of the head domain of the 30S subunit.</text>
</comment>
<comment type="subunit">
    <text>Part of the 30S ribosomal subunit.</text>
</comment>
<comment type="subcellular location">
    <subcellularLocation>
        <location>Plastid</location>
        <location>Chloroplast</location>
    </subcellularLocation>
</comment>
<comment type="similarity">
    <text evidence="3">Belongs to the universal ribosomal protein uS7 family.</text>
</comment>
<protein>
    <recommendedName>
        <fullName evidence="2">Small ribosomal subunit protein uS7cz/uS7cy</fullName>
    </recommendedName>
    <alternativeName>
        <fullName>30S ribosomal protein S7, chloroplastic</fullName>
    </alternativeName>
</protein>